<gene>
    <name evidence="3" type="primary">NAP2</name>
    <name evidence="4" type="ordered locus">Solyc04g005610.2.1</name>
</gene>
<protein>
    <recommendedName>
        <fullName evidence="3">NAC domain-containing protein 2</fullName>
        <shortName evidence="3">SlNAP2</shortName>
    </recommendedName>
</protein>
<evidence type="ECO:0000255" key="1">
    <source>
        <dbReference type="PROSITE-ProRule" id="PRU00353"/>
    </source>
</evidence>
<evidence type="ECO:0000269" key="2">
    <source>
    </source>
</evidence>
<evidence type="ECO:0000303" key="3">
    <source>
    </source>
</evidence>
<evidence type="ECO:0000305" key="4"/>
<reference key="1">
    <citation type="journal article" date="2012" name="Nature">
        <title>The tomato genome sequence provides insights into fleshy fruit evolution.</title>
        <authorList>
            <consortium name="Tomato Genome Consortium"/>
        </authorList>
    </citation>
    <scope>NUCLEOTIDE SEQUENCE [LARGE SCALE GENOMIC DNA]</scope>
    <source>
        <strain>cv. Heinz 1706</strain>
    </source>
</reference>
<reference key="2">
    <citation type="journal article" date="2018" name="Plant Physiol.">
        <title>The NAC transcription factor SlNAP2 regulates leaf senescence and fruit yield in tomato.</title>
        <authorList>
            <person name="Ma X."/>
            <person name="Zhang Y."/>
            <person name="Tureckova V."/>
            <person name="Xue G.-P."/>
            <person name="Fernie A.R."/>
            <person name="Mueller-Roeber B."/>
            <person name="Balazadeh S."/>
        </authorList>
    </citation>
    <scope>FUNCTION</scope>
    <scope>DISRUPTION PHENOTYPE</scope>
    <scope>INDUCTION BY LEAF SENESCENCE AND ABSCISIC ACID</scope>
    <scope>TISSUE SPECIFICITY</scope>
    <scope>GENE FAMILY</scope>
    <scope>NOMENCLATURE</scope>
    <source>
        <strain>cv. Moneymaker</strain>
    </source>
</reference>
<name>NAP2_SOLLC</name>
<organism>
    <name type="scientific">Solanum lycopersicum</name>
    <name type="common">Tomato</name>
    <name type="synonym">Lycopersicon esculentum</name>
    <dbReference type="NCBI Taxonomy" id="4081"/>
    <lineage>
        <taxon>Eukaryota</taxon>
        <taxon>Viridiplantae</taxon>
        <taxon>Streptophyta</taxon>
        <taxon>Embryophyta</taxon>
        <taxon>Tracheophyta</taxon>
        <taxon>Spermatophyta</taxon>
        <taxon>Magnoliopsida</taxon>
        <taxon>eudicotyledons</taxon>
        <taxon>Gunneridae</taxon>
        <taxon>Pentapetalae</taxon>
        <taxon>asterids</taxon>
        <taxon>lamiids</taxon>
        <taxon>Solanales</taxon>
        <taxon>Solanaceae</taxon>
        <taxon>Solanoideae</taxon>
        <taxon>Solaneae</taxon>
        <taxon>Solanum</taxon>
        <taxon>Solanum subgen. Lycopersicon</taxon>
    </lineage>
</organism>
<comment type="function">
    <text evidence="2">Transcription factor that binds DNA motifs 5'-CGT[AG](5N)NACG[ACT][AC][AT][ACG][ACT]-3' and 5'-CACG[ACT][AC][AT][AGT][CT]-3' in target genes promoters. Promotes leaf senescence (developmental, light-induced and ABA-induced senescence) and regulates fruit yield and sugar content, probably by establishing abscisic acid (ABA) homeostasis. Activates the expression of senescence and ABA associated genes including NCED1, ABCG40, CYP707A2, SAG113, SGR1 and PAO, by directly binding to their promoters.</text>
</comment>
<comment type="subcellular location">
    <subcellularLocation>
        <location evidence="1">Nucleus</location>
    </subcellularLocation>
</comment>
<comment type="tissue specificity">
    <text evidence="2">Expressed in roots, stem, flowers, and leaves.</text>
</comment>
<comment type="induction">
    <text evidence="2">Accumulates during age-dependent and dark-induced leaf senescence. Induced by abscisic acid (ABA).</text>
</comment>
<comment type="domain">
    <text evidence="1">The NAC domain includes a DNA binding domain and a dimerization domain.</text>
</comment>
<comment type="disruption phenotype">
    <text evidence="2">Delayed leaf senescence (including delayed leaf yellowing phenotype under darkness or after ABA treatment) but enhanced fruit yield and sugar content, likely due to prolonged leaf photosynthesis in aging plants; these phenotypes are increased in plants lacking both NAP1 and NAP2.</text>
</comment>
<dbReference type="EMBL" id="CM001067">
    <property type="status" value="NOT_ANNOTATED_CDS"/>
    <property type="molecule type" value="Genomic_DNA"/>
</dbReference>
<dbReference type="RefSeq" id="NP_001352326.1">
    <property type="nucleotide sequence ID" value="NM_001365397.1"/>
</dbReference>
<dbReference type="RefSeq" id="XP_004237044.1">
    <property type="nucleotide sequence ID" value="XM_004236996.3"/>
</dbReference>
<dbReference type="SMR" id="K4BNG7"/>
<dbReference type="FunCoup" id="K4BNG7">
    <property type="interactions" value="23"/>
</dbReference>
<dbReference type="STRING" id="4081.K4BNG7"/>
<dbReference type="PaxDb" id="4081-Solyc04g005610.2.1"/>
<dbReference type="EnsemblPlants" id="Solyc04g005610.3.1">
    <property type="protein sequence ID" value="Solyc04g005610.3.1"/>
    <property type="gene ID" value="Solyc04g005610.3"/>
</dbReference>
<dbReference type="GeneID" id="101248665"/>
<dbReference type="Gramene" id="Solyc04g005610.3.1">
    <property type="protein sequence ID" value="Solyc04g005610.3.1"/>
    <property type="gene ID" value="Solyc04g005610.3"/>
</dbReference>
<dbReference type="eggNOG" id="ENOG502QSIY">
    <property type="taxonomic scope" value="Eukaryota"/>
</dbReference>
<dbReference type="HOGENOM" id="CLU_035664_8_2_1"/>
<dbReference type="InParanoid" id="K4BNG7"/>
<dbReference type="OMA" id="NAGHAQM"/>
<dbReference type="OrthoDB" id="1921961at2759"/>
<dbReference type="PhylomeDB" id="K4BNG7"/>
<dbReference type="Proteomes" id="UP000004994">
    <property type="component" value="Chromosome 4"/>
</dbReference>
<dbReference type="GO" id="GO:0005634">
    <property type="term" value="C:nucleus"/>
    <property type="evidence" value="ECO:0007669"/>
    <property type="project" value="UniProtKB-SubCell"/>
</dbReference>
<dbReference type="GO" id="GO:0043565">
    <property type="term" value="F:sequence-specific DNA binding"/>
    <property type="evidence" value="ECO:0000314"/>
    <property type="project" value="UniProtKB"/>
</dbReference>
<dbReference type="GO" id="GO:1902265">
    <property type="term" value="P:abscisic acid homeostasis"/>
    <property type="evidence" value="ECO:0000314"/>
    <property type="project" value="UniProtKB"/>
</dbReference>
<dbReference type="GO" id="GO:0009738">
    <property type="term" value="P:abscisic acid-activated signaling pathway"/>
    <property type="evidence" value="ECO:0007669"/>
    <property type="project" value="UniProtKB-KW"/>
</dbReference>
<dbReference type="GO" id="GO:0010150">
    <property type="term" value="P:leaf senescence"/>
    <property type="evidence" value="ECO:0000314"/>
    <property type="project" value="UniProtKB"/>
</dbReference>
<dbReference type="GO" id="GO:0006355">
    <property type="term" value="P:regulation of DNA-templated transcription"/>
    <property type="evidence" value="ECO:0000314"/>
    <property type="project" value="UniProtKB"/>
</dbReference>
<dbReference type="GO" id="GO:0031155">
    <property type="term" value="P:regulation of reproductive fruiting body development"/>
    <property type="evidence" value="ECO:0000315"/>
    <property type="project" value="UniProtKB"/>
</dbReference>
<dbReference type="GO" id="GO:0009737">
    <property type="term" value="P:response to abscisic acid"/>
    <property type="evidence" value="ECO:0000315"/>
    <property type="project" value="UniProtKB"/>
</dbReference>
<dbReference type="GO" id="GO:0009646">
    <property type="term" value="P:response to absence of light"/>
    <property type="evidence" value="ECO:0000315"/>
    <property type="project" value="UniProtKB"/>
</dbReference>
<dbReference type="FunFam" id="2.170.150.80:FF:000004">
    <property type="entry name" value="NAC transcription factor"/>
    <property type="match status" value="1"/>
</dbReference>
<dbReference type="Gene3D" id="2.170.150.80">
    <property type="entry name" value="NAC domain"/>
    <property type="match status" value="1"/>
</dbReference>
<dbReference type="InterPro" id="IPR003441">
    <property type="entry name" value="NAC-dom"/>
</dbReference>
<dbReference type="InterPro" id="IPR036093">
    <property type="entry name" value="NAC_dom_sf"/>
</dbReference>
<dbReference type="PANTHER" id="PTHR31719:SF244">
    <property type="entry name" value="NAC DOMAIN-CONTAINING PROTEIN 2"/>
    <property type="match status" value="1"/>
</dbReference>
<dbReference type="PANTHER" id="PTHR31719">
    <property type="entry name" value="NAC TRANSCRIPTION FACTOR 56"/>
    <property type="match status" value="1"/>
</dbReference>
<dbReference type="Pfam" id="PF02365">
    <property type="entry name" value="NAM"/>
    <property type="match status" value="1"/>
</dbReference>
<dbReference type="SUPFAM" id="SSF101941">
    <property type="entry name" value="NAC domain"/>
    <property type="match status" value="1"/>
</dbReference>
<dbReference type="PROSITE" id="PS51005">
    <property type="entry name" value="NAC"/>
    <property type="match status" value="1"/>
</dbReference>
<sequence>MVGKNNSNHLPPGFRFHPTDEELIMYYLRNQATSKPCPSSIIPEVDVYKFDPWELPEKTEFGEKEWYFFTPRDRKYPNGVRPNRAAVSGYWKATGTDKGIYSGTKYVGIKKALVFYKGKPPKGIKTDWIMHEYRLSESRTQPTRPNGSMRLDDWVLCRIYKKKNLERAIEMMKVEEDTQEPQIMSVTNPIHEVVASNGQQTLKLPRTCSLSHLLEMDYFGSISQLFDDNNSYNTISQNNTLMTNVNGYVMPHQAMEKFQLGEVSQISMNPSYQFQ</sequence>
<feature type="chain" id="PRO_0000445684" description="NAC domain-containing protein 2">
    <location>
        <begin position="1"/>
        <end position="275"/>
    </location>
</feature>
<feature type="domain" description="NAC" evidence="1">
    <location>
        <begin position="10"/>
        <end position="162"/>
    </location>
</feature>
<feature type="DNA-binding region" evidence="1">
    <location>
        <begin position="107"/>
        <end position="168"/>
    </location>
</feature>
<proteinExistence type="evidence at transcript level"/>
<keyword id="KW-0938">Abscisic acid signaling pathway</keyword>
<keyword id="KW-0010">Activator</keyword>
<keyword id="KW-0238">DNA-binding</keyword>
<keyword id="KW-0539">Nucleus</keyword>
<keyword id="KW-1185">Reference proteome</keyword>
<keyword id="KW-0804">Transcription</keyword>
<keyword id="KW-0805">Transcription regulation</keyword>
<accession>K4BNG7</accession>